<gene>
    <name evidence="1" type="primary">thiM</name>
    <name type="ordered locus">Sca_1594</name>
</gene>
<reference key="1">
    <citation type="submission" date="1998-11" db="EMBL/GenBank/DDBJ databases">
        <title>Identification of an operon involved in thiamin biosynthesis in Staphylococcus carnosus TM300.</title>
        <authorList>
            <person name="Krismer B."/>
            <person name="Goetz F."/>
        </authorList>
    </citation>
    <scope>NUCLEOTIDE SEQUENCE [GENOMIC DNA]</scope>
</reference>
<reference key="2">
    <citation type="journal article" date="2009" name="Appl. Environ. Microbiol.">
        <title>Genome analysis of the meat starter culture bacterium Staphylococcus carnosus TM300.</title>
        <authorList>
            <person name="Rosenstein R."/>
            <person name="Nerz C."/>
            <person name="Biswas L."/>
            <person name="Resch A."/>
            <person name="Raddatz G."/>
            <person name="Schuster S.C."/>
            <person name="Goetz F."/>
        </authorList>
    </citation>
    <scope>NUCLEOTIDE SEQUENCE [LARGE SCALE GENOMIC DNA]</scope>
    <source>
        <strain>TM300</strain>
    </source>
</reference>
<proteinExistence type="inferred from homology"/>
<organism>
    <name type="scientific">Staphylococcus carnosus (strain TM300)</name>
    <dbReference type="NCBI Taxonomy" id="396513"/>
    <lineage>
        <taxon>Bacteria</taxon>
        <taxon>Bacillati</taxon>
        <taxon>Bacillota</taxon>
        <taxon>Bacilli</taxon>
        <taxon>Bacillales</taxon>
        <taxon>Staphylococcaceae</taxon>
        <taxon>Staphylococcus</taxon>
    </lineage>
</organism>
<protein>
    <recommendedName>
        <fullName evidence="1">Hydroxyethylthiazole kinase</fullName>
        <ecNumber evidence="1">2.7.1.50</ecNumber>
    </recommendedName>
    <alternativeName>
        <fullName evidence="1">4-methyl-5-beta-hydroxyethylthiazole kinase</fullName>
        <shortName evidence="1">TH kinase</shortName>
        <shortName evidence="1">Thz kinase</shortName>
    </alternativeName>
</protein>
<evidence type="ECO:0000255" key="1">
    <source>
        <dbReference type="HAMAP-Rule" id="MF_00228"/>
    </source>
</evidence>
<comment type="function">
    <text evidence="1">Catalyzes the phosphorylation of the hydroxyl group of 4-methyl-5-beta-hydroxyethylthiazole (THZ).</text>
</comment>
<comment type="catalytic activity">
    <reaction evidence="1">
        <text>5-(2-hydroxyethyl)-4-methylthiazole + ATP = 4-methyl-5-(2-phosphooxyethyl)-thiazole + ADP + H(+)</text>
        <dbReference type="Rhea" id="RHEA:24212"/>
        <dbReference type="ChEBI" id="CHEBI:15378"/>
        <dbReference type="ChEBI" id="CHEBI:17957"/>
        <dbReference type="ChEBI" id="CHEBI:30616"/>
        <dbReference type="ChEBI" id="CHEBI:58296"/>
        <dbReference type="ChEBI" id="CHEBI:456216"/>
        <dbReference type="EC" id="2.7.1.50"/>
    </reaction>
</comment>
<comment type="cofactor">
    <cofactor evidence="1">
        <name>Mg(2+)</name>
        <dbReference type="ChEBI" id="CHEBI:18420"/>
    </cofactor>
</comment>
<comment type="pathway">
    <text evidence="1">Cofactor biosynthesis; thiamine diphosphate biosynthesis; 4-methyl-5-(2-phosphoethyl)-thiazole from 5-(2-hydroxyethyl)-4-methylthiazole: step 1/1.</text>
</comment>
<comment type="similarity">
    <text evidence="1">Belongs to the Thz kinase family.</text>
</comment>
<keyword id="KW-0067">ATP-binding</keyword>
<keyword id="KW-0418">Kinase</keyword>
<keyword id="KW-0460">Magnesium</keyword>
<keyword id="KW-0479">Metal-binding</keyword>
<keyword id="KW-0547">Nucleotide-binding</keyword>
<keyword id="KW-1185">Reference proteome</keyword>
<keyword id="KW-0784">Thiamine biosynthesis</keyword>
<keyword id="KW-0808">Transferase</keyword>
<sequence>MNKILDQIRTEHPLVICYTNDVVKNFTANGLLSLGASPTMSEAPQEAEDFYPVAGSVLINIGTLTKHHEHAMLENAKIANETETPLVFDPVAVGASKYRKDFCKYFLKKIKPTVIKGNASEILALIDDTATMKGTDSADNLDVVDIAEKAYKEYQTAIILTGETDVIVQDNKVVKLSNGSHFLAKITGAGCLLGAVVGAFLFRNTHPSIETLIEAVSVYNIAAERAEQLSDSKGPGTFLTQFIDALYRIDSDAVAENCNLEEVK</sequence>
<accession>Q9RGS6</accession>
<accession>B9DMF6</accession>
<name>THIM_STACT</name>
<dbReference type="EC" id="2.7.1.50" evidence="1"/>
<dbReference type="EMBL" id="AF109218">
    <property type="protein sequence ID" value="AAF25543.1"/>
    <property type="molecule type" value="Genomic_DNA"/>
</dbReference>
<dbReference type="EMBL" id="AM295250">
    <property type="protein sequence ID" value="CAL28499.1"/>
    <property type="molecule type" value="Genomic_DNA"/>
</dbReference>
<dbReference type="RefSeq" id="WP_015900839.1">
    <property type="nucleotide sequence ID" value="NC_012121.1"/>
</dbReference>
<dbReference type="SMR" id="Q9RGS6"/>
<dbReference type="GeneID" id="93794049"/>
<dbReference type="KEGG" id="sca:SCA_1594"/>
<dbReference type="eggNOG" id="COG2145">
    <property type="taxonomic scope" value="Bacteria"/>
</dbReference>
<dbReference type="HOGENOM" id="CLU_019943_0_2_9"/>
<dbReference type="OrthoDB" id="9778146at2"/>
<dbReference type="BioCyc" id="SCAR396513:SCA_RS08095-MONOMER"/>
<dbReference type="UniPathway" id="UPA00060">
    <property type="reaction ID" value="UER00139"/>
</dbReference>
<dbReference type="Proteomes" id="UP000000444">
    <property type="component" value="Chromosome"/>
</dbReference>
<dbReference type="GO" id="GO:0005524">
    <property type="term" value="F:ATP binding"/>
    <property type="evidence" value="ECO:0007669"/>
    <property type="project" value="UniProtKB-UniRule"/>
</dbReference>
<dbReference type="GO" id="GO:0004417">
    <property type="term" value="F:hydroxyethylthiazole kinase activity"/>
    <property type="evidence" value="ECO:0007669"/>
    <property type="project" value="UniProtKB-UniRule"/>
</dbReference>
<dbReference type="GO" id="GO:0000287">
    <property type="term" value="F:magnesium ion binding"/>
    <property type="evidence" value="ECO:0007669"/>
    <property type="project" value="UniProtKB-UniRule"/>
</dbReference>
<dbReference type="GO" id="GO:0009228">
    <property type="term" value="P:thiamine biosynthetic process"/>
    <property type="evidence" value="ECO:0007669"/>
    <property type="project" value="UniProtKB-KW"/>
</dbReference>
<dbReference type="GO" id="GO:0009229">
    <property type="term" value="P:thiamine diphosphate biosynthetic process"/>
    <property type="evidence" value="ECO:0007669"/>
    <property type="project" value="UniProtKB-UniRule"/>
</dbReference>
<dbReference type="CDD" id="cd01170">
    <property type="entry name" value="THZ_kinase"/>
    <property type="match status" value="1"/>
</dbReference>
<dbReference type="Gene3D" id="3.40.1190.20">
    <property type="match status" value="1"/>
</dbReference>
<dbReference type="HAMAP" id="MF_00228">
    <property type="entry name" value="Thz_kinase"/>
    <property type="match status" value="1"/>
</dbReference>
<dbReference type="InterPro" id="IPR000417">
    <property type="entry name" value="Hyethyz_kinase"/>
</dbReference>
<dbReference type="InterPro" id="IPR029056">
    <property type="entry name" value="Ribokinase-like"/>
</dbReference>
<dbReference type="NCBIfam" id="NF006830">
    <property type="entry name" value="PRK09355.1"/>
    <property type="match status" value="1"/>
</dbReference>
<dbReference type="NCBIfam" id="TIGR00694">
    <property type="entry name" value="thiM"/>
    <property type="match status" value="1"/>
</dbReference>
<dbReference type="Pfam" id="PF02110">
    <property type="entry name" value="HK"/>
    <property type="match status" value="1"/>
</dbReference>
<dbReference type="PIRSF" id="PIRSF000513">
    <property type="entry name" value="Thz_kinase"/>
    <property type="match status" value="1"/>
</dbReference>
<dbReference type="PRINTS" id="PR01099">
    <property type="entry name" value="HYETHTZKNASE"/>
</dbReference>
<dbReference type="SUPFAM" id="SSF53613">
    <property type="entry name" value="Ribokinase-like"/>
    <property type="match status" value="1"/>
</dbReference>
<feature type="chain" id="PRO_0000156960" description="Hydroxyethylthiazole kinase">
    <location>
        <begin position="1"/>
        <end position="264"/>
    </location>
</feature>
<feature type="binding site" evidence="1">
    <location>
        <position position="40"/>
    </location>
    <ligand>
        <name>substrate</name>
    </ligand>
</feature>
<feature type="binding site" evidence="1">
    <location>
        <position position="116"/>
    </location>
    <ligand>
        <name>ATP</name>
        <dbReference type="ChEBI" id="CHEBI:30616"/>
    </ligand>
</feature>
<feature type="binding site" evidence="1">
    <location>
        <position position="161"/>
    </location>
    <ligand>
        <name>ATP</name>
        <dbReference type="ChEBI" id="CHEBI:30616"/>
    </ligand>
</feature>
<feature type="binding site" evidence="1">
    <location>
        <position position="188"/>
    </location>
    <ligand>
        <name>substrate</name>
    </ligand>
</feature>